<evidence type="ECO:0000250" key="1">
    <source>
        <dbReference type="UniProtKB" id="O08734"/>
    </source>
</evidence>
<evidence type="ECO:0000255" key="2"/>
<evidence type="ECO:0000256" key="3">
    <source>
        <dbReference type="SAM" id="MobiDB-lite"/>
    </source>
</evidence>
<evidence type="ECO:0000269" key="4">
    <source>
    </source>
</evidence>
<evidence type="ECO:0000269" key="5">
    <source>
    </source>
</evidence>
<evidence type="ECO:0000269" key="6">
    <source>
    </source>
</evidence>
<evidence type="ECO:0000269" key="7">
    <source>
    </source>
</evidence>
<evidence type="ECO:0000269" key="8">
    <source>
    </source>
</evidence>
<evidence type="ECO:0000269" key="9">
    <source>
    </source>
</evidence>
<evidence type="ECO:0000269" key="10">
    <source>
    </source>
</evidence>
<evidence type="ECO:0000269" key="11">
    <source>
    </source>
</evidence>
<evidence type="ECO:0000269" key="12">
    <source>
    </source>
</evidence>
<evidence type="ECO:0000269" key="13">
    <source>
    </source>
</evidence>
<evidence type="ECO:0000269" key="14">
    <source>
    </source>
</evidence>
<evidence type="ECO:0000269" key="15">
    <source ref="4"/>
</evidence>
<evidence type="ECO:0000303" key="16">
    <source>
    </source>
</evidence>
<evidence type="ECO:0000305" key="17"/>
<evidence type="ECO:0007744" key="18">
    <source>
    </source>
</evidence>
<evidence type="ECO:0007744" key="19">
    <source>
    </source>
</evidence>
<evidence type="ECO:0007829" key="20">
    <source>
        <dbReference type="PDB" id="5VX1"/>
    </source>
</evidence>
<evidence type="ECO:0007829" key="21">
    <source>
        <dbReference type="PDB" id="7OFM"/>
    </source>
</evidence>
<evidence type="ECO:0007829" key="22">
    <source>
        <dbReference type="PDB" id="8GSV"/>
    </source>
</evidence>
<proteinExistence type="evidence at protein level"/>
<feature type="initiator methionine" description="Removed" evidence="18 19">
    <location>
        <position position="1"/>
    </location>
</feature>
<feature type="chain" id="PRO_0000143059" description="Bcl-2 homologous antagonist/killer">
    <location>
        <begin position="2"/>
        <end position="211"/>
    </location>
</feature>
<feature type="transmembrane region" description="Helical" evidence="2">
    <location>
        <begin position="188"/>
        <end position="205"/>
    </location>
</feature>
<feature type="region of interest" description="Disordered" evidence="3">
    <location>
        <begin position="1"/>
        <end position="28"/>
    </location>
</feature>
<feature type="short sequence motif" description="BH3">
    <location>
        <begin position="74"/>
        <end position="88"/>
    </location>
</feature>
<feature type="short sequence motif" description="BH1">
    <location>
        <begin position="117"/>
        <end position="136"/>
    </location>
</feature>
<feature type="short sequence motif" description="BH2">
    <location>
        <begin position="169"/>
        <end position="184"/>
    </location>
</feature>
<feature type="binding site">
    <location>
        <position position="160"/>
    </location>
    <ligand>
        <name>Zn(2+)</name>
        <dbReference type="ChEBI" id="CHEBI:29105"/>
        <note>ligand shared between dimeric partners</note>
    </ligand>
</feature>
<feature type="binding site">
    <location>
        <position position="164"/>
    </location>
    <ligand>
        <name>Zn(2+)</name>
        <dbReference type="ChEBI" id="CHEBI:29105"/>
        <note>ligand shared between dimeric partners</note>
    </ligand>
</feature>
<feature type="modified residue" description="N-acetylalanine" evidence="18 19">
    <location>
        <position position="2"/>
    </location>
</feature>
<feature type="splice variant" id="VSP_056551" description="In isoform 2." evidence="16">
    <original>SLFESGINWGRVVALLGFGYRLALHVYQHGLTGFLGQ</original>
    <variation>RPAATPTACLRVASIGAVWWLFWASATVWPYTSTSMA</variation>
    <location>
        <begin position="117"/>
        <end position="153"/>
    </location>
</feature>
<feature type="splice variant" id="VSP_056552" description="In isoform 2." evidence="16">
    <location>
        <begin position="154"/>
        <end position="211"/>
    </location>
</feature>
<feature type="sequence variant" id="VAR_018829" description="In dbSNP:rs4987115." evidence="15">
    <original>A</original>
    <variation>V</variation>
    <location>
        <position position="28"/>
    </location>
</feature>
<feature type="sequence variant" id="VAR_048417" description="In dbSNP:rs1051911.">
    <original>R</original>
    <variation>H</variation>
    <location>
        <position position="42"/>
    </location>
</feature>
<feature type="sequence variant" id="VAR_018830" description="In dbSNP:rs5745592." evidence="15">
    <original>S</original>
    <variation>R</variation>
    <location>
        <position position="69"/>
    </location>
</feature>
<feature type="mutagenesis site" description="Strongly reduced zinc binding and homodimerization." evidence="7">
    <original>H</original>
    <variation>A</variation>
    <location>
        <position position="164"/>
    </location>
</feature>
<feature type="helix" evidence="20">
    <location>
        <begin position="24"/>
        <end position="47"/>
    </location>
</feature>
<feature type="strand" evidence="20">
    <location>
        <begin position="48"/>
        <end position="51"/>
    </location>
</feature>
<feature type="turn" evidence="20">
    <location>
        <begin position="58"/>
        <end position="61"/>
    </location>
</feature>
<feature type="helix" evidence="20">
    <location>
        <begin position="70"/>
        <end position="79"/>
    </location>
</feature>
<feature type="helix" evidence="20">
    <location>
        <begin position="84"/>
        <end position="100"/>
    </location>
</feature>
<feature type="turn" evidence="20">
    <location>
        <begin position="104"/>
        <end position="106"/>
    </location>
</feature>
<feature type="helix" evidence="20">
    <location>
        <begin position="107"/>
        <end position="119"/>
    </location>
</feature>
<feature type="strand" evidence="22">
    <location>
        <begin position="122"/>
        <end position="124"/>
    </location>
</feature>
<feature type="helix" evidence="20">
    <location>
        <begin position="125"/>
        <end position="145"/>
    </location>
</feature>
<feature type="strand" evidence="20">
    <location>
        <begin position="146"/>
        <end position="148"/>
    </location>
</feature>
<feature type="helix" evidence="20">
    <location>
        <begin position="151"/>
        <end position="164"/>
    </location>
</feature>
<feature type="helix" evidence="20">
    <location>
        <begin position="167"/>
        <end position="173"/>
    </location>
</feature>
<feature type="helix" evidence="20">
    <location>
        <begin position="177"/>
        <end position="181"/>
    </location>
</feature>
<feature type="helix" evidence="21">
    <location>
        <begin position="188"/>
        <end position="209"/>
    </location>
</feature>
<keyword id="KW-0002">3D-structure</keyword>
<keyword id="KW-0007">Acetylation</keyword>
<keyword id="KW-0025">Alternative splicing</keyword>
<keyword id="KW-0053">Apoptosis</keyword>
<keyword id="KW-0945">Host-virus interaction</keyword>
<keyword id="KW-0472">Membrane</keyword>
<keyword id="KW-0479">Metal-binding</keyword>
<keyword id="KW-0496">Mitochondrion</keyword>
<keyword id="KW-1000">Mitochondrion outer membrane</keyword>
<keyword id="KW-1267">Proteomics identification</keyword>
<keyword id="KW-1185">Reference proteome</keyword>
<keyword id="KW-0812">Transmembrane</keyword>
<keyword id="KW-1133">Transmembrane helix</keyword>
<keyword id="KW-0862">Zinc</keyword>
<name>BAK_HUMAN</name>
<protein>
    <recommendedName>
        <fullName>Bcl-2 homologous antagonist/killer</fullName>
    </recommendedName>
    <alternativeName>
        <fullName>Apoptosis regulator BAK</fullName>
    </alternativeName>
    <alternativeName>
        <fullName>Bcl-2-like protein 7</fullName>
        <shortName>Bcl2-L-7</shortName>
    </alternativeName>
</protein>
<organism>
    <name type="scientific">Homo sapiens</name>
    <name type="common">Human</name>
    <dbReference type="NCBI Taxonomy" id="9606"/>
    <lineage>
        <taxon>Eukaryota</taxon>
        <taxon>Metazoa</taxon>
        <taxon>Chordata</taxon>
        <taxon>Craniata</taxon>
        <taxon>Vertebrata</taxon>
        <taxon>Euteleostomi</taxon>
        <taxon>Mammalia</taxon>
        <taxon>Eutheria</taxon>
        <taxon>Euarchontoglires</taxon>
        <taxon>Primates</taxon>
        <taxon>Haplorrhini</taxon>
        <taxon>Catarrhini</taxon>
        <taxon>Hominidae</taxon>
        <taxon>Homo</taxon>
    </lineage>
</organism>
<accession>Q16611</accession>
<accession>C0H5Y7</accession>
<accession>Q6I9T6</accession>
<accession>Q92533</accession>
<gene>
    <name type="primary">BAK1</name>
    <name type="synonym">BAK</name>
    <name type="synonym">BCL2L7</name>
    <name type="synonym">CDN1</name>
</gene>
<reference key="1">
    <citation type="journal article" date="1995" name="Nature">
        <title>Cloning of a bcl-2 homologue by interaction with adenovirus E1B 19K.</title>
        <authorList>
            <person name="Farrow S.N."/>
            <person name="White J.H.M."/>
            <person name="Martinou I."/>
            <person name="Raven T."/>
            <person name="Pun K.-T."/>
            <person name="Grinham C.J."/>
            <person name="Martinou J.-C."/>
            <person name="Brown R."/>
        </authorList>
    </citation>
    <scope>NUCLEOTIDE SEQUENCE [MRNA] (ISOFORM 1)</scope>
    <scope>INTERACTION WITH ADENOVIRUS E1B 19K PROTEIN</scope>
    <source>
        <tissue>B-cell</tissue>
    </source>
</reference>
<reference key="2">
    <citation type="journal article" date="1995" name="Nature">
        <title>Induction of apoptosis by the Bcl-2 homologue Bak.</title>
        <authorList>
            <person name="Chittenden T."/>
            <person name="Harrington E.A."/>
            <person name="O'Connor R."/>
            <person name="Flemington C."/>
            <person name="Lutz R.J."/>
            <person name="Evan G.I."/>
            <person name="Guild B.C."/>
        </authorList>
    </citation>
    <scope>NUCLEOTIDE SEQUENCE [MRNA] (ISOFORM 1)</scope>
</reference>
<reference key="3">
    <citation type="journal article" date="1995" name="Nature">
        <title>Modulation of apoptosis by the widely distributed Bcl-2 homologue Bak.</title>
        <authorList>
            <person name="Kiefer M.C."/>
            <person name="Brauer M.J."/>
            <person name="Powers V.C."/>
            <person name="Wu J.J."/>
            <person name="Umansky S.R."/>
            <person name="Tomei L.D."/>
            <person name="Barr P.J."/>
        </authorList>
    </citation>
    <scope>NUCLEOTIDE SEQUENCE [MRNA] (ISOFORM 1)</scope>
</reference>
<reference key="4">
    <citation type="submission" date="2003-03" db="EMBL/GenBank/DDBJ databases">
        <authorList>
            <consortium name="NIEHS SNPs program"/>
        </authorList>
    </citation>
    <scope>NUCLEOTIDE SEQUENCE [GENOMIC DNA]</scope>
    <scope>VARIANTS VAL-28 AND ARG-69</scope>
</reference>
<reference key="5">
    <citation type="submission" date="2004-06" db="EMBL/GenBank/DDBJ databases">
        <title>Cloning of human full open reading frames in Gateway(TM) system entry vector (pDONR201).</title>
        <authorList>
            <person name="Ebert L."/>
            <person name="Schick M."/>
            <person name="Neubert P."/>
            <person name="Schatten R."/>
            <person name="Henze S."/>
            <person name="Korn B."/>
        </authorList>
    </citation>
    <scope>NUCLEOTIDE SEQUENCE [LARGE SCALE MRNA] (ISOFORM 1)</scope>
</reference>
<reference key="6">
    <citation type="journal article" date="2003" name="Nature">
        <title>The DNA sequence and analysis of human chromosome 6.</title>
        <authorList>
            <person name="Mungall A.J."/>
            <person name="Palmer S.A."/>
            <person name="Sims S.K."/>
            <person name="Edwards C.A."/>
            <person name="Ashurst J.L."/>
            <person name="Wilming L."/>
            <person name="Jones M.C."/>
            <person name="Horton R."/>
            <person name="Hunt S.E."/>
            <person name="Scott C.E."/>
            <person name="Gilbert J.G.R."/>
            <person name="Clamp M.E."/>
            <person name="Bethel G."/>
            <person name="Milne S."/>
            <person name="Ainscough R."/>
            <person name="Almeida J.P."/>
            <person name="Ambrose K.D."/>
            <person name="Andrews T.D."/>
            <person name="Ashwell R.I.S."/>
            <person name="Babbage A.K."/>
            <person name="Bagguley C.L."/>
            <person name="Bailey J."/>
            <person name="Banerjee R."/>
            <person name="Barker D.J."/>
            <person name="Barlow K.F."/>
            <person name="Bates K."/>
            <person name="Beare D.M."/>
            <person name="Beasley H."/>
            <person name="Beasley O."/>
            <person name="Bird C.P."/>
            <person name="Blakey S.E."/>
            <person name="Bray-Allen S."/>
            <person name="Brook J."/>
            <person name="Brown A.J."/>
            <person name="Brown J.Y."/>
            <person name="Burford D.C."/>
            <person name="Burrill W."/>
            <person name="Burton J."/>
            <person name="Carder C."/>
            <person name="Carter N.P."/>
            <person name="Chapman J.C."/>
            <person name="Clark S.Y."/>
            <person name="Clark G."/>
            <person name="Clee C.M."/>
            <person name="Clegg S."/>
            <person name="Cobley V."/>
            <person name="Collier R.E."/>
            <person name="Collins J.E."/>
            <person name="Colman L.K."/>
            <person name="Corby N.R."/>
            <person name="Coville G.J."/>
            <person name="Culley K.M."/>
            <person name="Dhami P."/>
            <person name="Davies J."/>
            <person name="Dunn M."/>
            <person name="Earthrowl M.E."/>
            <person name="Ellington A.E."/>
            <person name="Evans K.A."/>
            <person name="Faulkner L."/>
            <person name="Francis M.D."/>
            <person name="Frankish A."/>
            <person name="Frankland J."/>
            <person name="French L."/>
            <person name="Garner P."/>
            <person name="Garnett J."/>
            <person name="Ghori M.J."/>
            <person name="Gilby L.M."/>
            <person name="Gillson C.J."/>
            <person name="Glithero R.J."/>
            <person name="Grafham D.V."/>
            <person name="Grant M."/>
            <person name="Gribble S."/>
            <person name="Griffiths C."/>
            <person name="Griffiths M.N.D."/>
            <person name="Hall R."/>
            <person name="Halls K.S."/>
            <person name="Hammond S."/>
            <person name="Harley J.L."/>
            <person name="Hart E.A."/>
            <person name="Heath P.D."/>
            <person name="Heathcott R."/>
            <person name="Holmes S.J."/>
            <person name="Howden P.J."/>
            <person name="Howe K.L."/>
            <person name="Howell G.R."/>
            <person name="Huckle E."/>
            <person name="Humphray S.J."/>
            <person name="Humphries M.D."/>
            <person name="Hunt A.R."/>
            <person name="Johnson C.M."/>
            <person name="Joy A.A."/>
            <person name="Kay M."/>
            <person name="Keenan S.J."/>
            <person name="Kimberley A.M."/>
            <person name="King A."/>
            <person name="Laird G.K."/>
            <person name="Langford C."/>
            <person name="Lawlor S."/>
            <person name="Leongamornlert D.A."/>
            <person name="Leversha M."/>
            <person name="Lloyd C.R."/>
            <person name="Lloyd D.M."/>
            <person name="Loveland J.E."/>
            <person name="Lovell J."/>
            <person name="Martin S."/>
            <person name="Mashreghi-Mohammadi M."/>
            <person name="Maslen G.L."/>
            <person name="Matthews L."/>
            <person name="McCann O.T."/>
            <person name="McLaren S.J."/>
            <person name="McLay K."/>
            <person name="McMurray A."/>
            <person name="Moore M.J.F."/>
            <person name="Mullikin J.C."/>
            <person name="Niblett D."/>
            <person name="Nickerson T."/>
            <person name="Novik K.L."/>
            <person name="Oliver K."/>
            <person name="Overton-Larty E.K."/>
            <person name="Parker A."/>
            <person name="Patel R."/>
            <person name="Pearce A.V."/>
            <person name="Peck A.I."/>
            <person name="Phillimore B.J.C.T."/>
            <person name="Phillips S."/>
            <person name="Plumb R.W."/>
            <person name="Porter K.M."/>
            <person name="Ramsey Y."/>
            <person name="Ranby S.A."/>
            <person name="Rice C.M."/>
            <person name="Ross M.T."/>
            <person name="Searle S.M."/>
            <person name="Sehra H.K."/>
            <person name="Sheridan E."/>
            <person name="Skuce C.D."/>
            <person name="Smith S."/>
            <person name="Smith M."/>
            <person name="Spraggon L."/>
            <person name="Squares S.L."/>
            <person name="Steward C.A."/>
            <person name="Sycamore N."/>
            <person name="Tamlyn-Hall G."/>
            <person name="Tester J."/>
            <person name="Theaker A.J."/>
            <person name="Thomas D.W."/>
            <person name="Thorpe A."/>
            <person name="Tracey A."/>
            <person name="Tromans A."/>
            <person name="Tubby B."/>
            <person name="Wall M."/>
            <person name="Wallis J.M."/>
            <person name="West A.P."/>
            <person name="White S.S."/>
            <person name="Whitehead S.L."/>
            <person name="Whittaker H."/>
            <person name="Wild A."/>
            <person name="Willey D.J."/>
            <person name="Wilmer T.E."/>
            <person name="Wood J.M."/>
            <person name="Wray P.W."/>
            <person name="Wyatt J.C."/>
            <person name="Young L."/>
            <person name="Younger R.M."/>
            <person name="Bentley D.R."/>
            <person name="Coulson A."/>
            <person name="Durbin R.M."/>
            <person name="Hubbard T."/>
            <person name="Sulston J.E."/>
            <person name="Dunham I."/>
            <person name="Rogers J."/>
            <person name="Beck S."/>
        </authorList>
    </citation>
    <scope>NUCLEOTIDE SEQUENCE [LARGE SCALE GENOMIC DNA]</scope>
</reference>
<reference key="7">
    <citation type="submission" date="2005-07" db="EMBL/GenBank/DDBJ databases">
        <authorList>
            <person name="Mural R.J."/>
            <person name="Istrail S."/>
            <person name="Sutton G.G."/>
            <person name="Florea L."/>
            <person name="Halpern A.L."/>
            <person name="Mobarry C.M."/>
            <person name="Lippert R."/>
            <person name="Walenz B."/>
            <person name="Shatkay H."/>
            <person name="Dew I."/>
            <person name="Miller J.R."/>
            <person name="Flanigan M.J."/>
            <person name="Edwards N.J."/>
            <person name="Bolanos R."/>
            <person name="Fasulo D."/>
            <person name="Halldorsson B.V."/>
            <person name="Hannenhalli S."/>
            <person name="Turner R."/>
            <person name="Yooseph S."/>
            <person name="Lu F."/>
            <person name="Nusskern D.R."/>
            <person name="Shue B.C."/>
            <person name="Zheng X.H."/>
            <person name="Zhong F."/>
            <person name="Delcher A.L."/>
            <person name="Huson D.H."/>
            <person name="Kravitz S.A."/>
            <person name="Mouchard L."/>
            <person name="Reinert K."/>
            <person name="Remington K.A."/>
            <person name="Clark A.G."/>
            <person name="Waterman M.S."/>
            <person name="Eichler E.E."/>
            <person name="Adams M.D."/>
            <person name="Hunkapiller M.W."/>
            <person name="Myers E.W."/>
            <person name="Venter J.C."/>
        </authorList>
    </citation>
    <scope>NUCLEOTIDE SEQUENCE [LARGE SCALE GENOMIC DNA]</scope>
</reference>
<reference key="8">
    <citation type="journal article" date="2004" name="Genome Res.">
        <title>The status, quality, and expansion of the NIH full-length cDNA project: the Mammalian Gene Collection (MGC).</title>
        <authorList>
            <consortium name="The MGC Project Team"/>
        </authorList>
    </citation>
    <scope>NUCLEOTIDE SEQUENCE [LARGE SCALE MRNA] (ISOFORMS 1 AND 2)</scope>
    <source>
        <tissue>Brain</tissue>
        <tissue>Lung</tissue>
    </source>
</reference>
<reference key="9">
    <citation type="submission" date="1996-11" db="EMBL/GenBank/DDBJ databases">
        <title>Estrogen alters expression of apoptosis-regulators, Bcl-2, Bcl-xL and Bak, as well as susceptibility to therapeutic agents of human breast cancer cells.</title>
        <authorList>
            <person name="Eguchi H."/>
            <person name="Hayashi S."/>
        </authorList>
    </citation>
    <scope>NUCLEOTIDE SEQUENCE [GENOMIC DNA] OF 96-206</scope>
</reference>
<reference key="10">
    <citation type="journal article" date="1995" name="EMBO J.">
        <title>A conserved domain in Bak, distinct from BH1 and BH2, mediates cell death and protein binding functions.</title>
        <authorList>
            <person name="Chittenden T."/>
            <person name="Flemington C."/>
            <person name="Houghton A.B."/>
            <person name="Ebb R.G."/>
            <person name="Gallo G.J."/>
            <person name="Elangovan B."/>
            <person name="Chinnadurai G."/>
            <person name="Lutz R.J."/>
        </authorList>
    </citation>
    <scope>MUTAGENESIS</scope>
    <scope>FUNCTION OF BH3 MOTIF</scope>
</reference>
<reference key="11">
    <citation type="journal article" date="1999" name="J. Virol.">
        <title>Epstein-Barr virus encodes a novel homolog of the bcl-2 oncogene that inhibits apoptosis and associates with Bax and Bak.</title>
        <authorList>
            <person name="Marshall W.L."/>
            <person name="Yim C."/>
            <person name="Gustafson E."/>
            <person name="Graf T."/>
            <person name="Sage D.R."/>
            <person name="Hanify K."/>
            <person name="Williams L."/>
            <person name="Fingeroth J."/>
            <person name="Finberg R.W."/>
        </authorList>
    </citation>
    <scope>INTERACTION WITH EPSTEIN-BARR VIRUS PROTEIN BALF1</scope>
</reference>
<reference key="12">
    <citation type="journal article" date="2006" name="Cell Death Differ.">
        <title>Interaction of F1L with the BH3 domain of Bak is responsible for inhibiting vaccinia-induced apoptosis.</title>
        <authorList>
            <person name="Postigo A."/>
            <person name="Cross J.R."/>
            <person name="Downward J."/>
            <person name="Way M."/>
        </authorList>
    </citation>
    <scope>INTERACTION WITH VACCINIA VIRUS PROTEIN F1</scope>
</reference>
<reference key="13">
    <citation type="journal article" date="2006" name="PLoS Biol.">
        <title>IAN family critically regulates survival and development of T lymphocytes.</title>
        <authorList>
            <person name="Nitta T."/>
            <person name="Nasreen M."/>
            <person name="Seike T."/>
            <person name="Goji A."/>
            <person name="Ohigashi I."/>
            <person name="Miyazaki T."/>
            <person name="Ohta T."/>
            <person name="Kanno M."/>
            <person name="Takahama Y."/>
        </authorList>
    </citation>
    <scope>INTERACTION WITH GIMAP3 AND GIMAP5</scope>
</reference>
<reference key="14">
    <citation type="journal article" date="2009" name="Anal. Chem.">
        <title>Lys-N and trypsin cover complementary parts of the phosphoproteome in a refined SCX-based approach.</title>
        <authorList>
            <person name="Gauci S."/>
            <person name="Helbig A.O."/>
            <person name="Slijper M."/>
            <person name="Krijgsveld J."/>
            <person name="Heck A.J."/>
            <person name="Mohammed S."/>
        </authorList>
    </citation>
    <scope>ACETYLATION [LARGE SCALE ANALYSIS] AT ALA-2</scope>
    <scope>CLEAVAGE OF INITIATOR METHIONINE [LARGE SCALE ANALYSIS]</scope>
    <scope>IDENTIFICATION BY MASS SPECTROMETRY [LARGE SCALE ANALYSIS]</scope>
</reference>
<reference key="15">
    <citation type="journal article" date="2011" name="BMC Syst. Biol.">
        <title>Initial characterization of the human central proteome.</title>
        <authorList>
            <person name="Burkard T.R."/>
            <person name="Planyavsky M."/>
            <person name="Kaupe I."/>
            <person name="Breitwieser F.P."/>
            <person name="Buerckstuemmer T."/>
            <person name="Bennett K.L."/>
            <person name="Superti-Furga G."/>
            <person name="Colinge J."/>
        </authorList>
    </citation>
    <scope>IDENTIFICATION BY MASS SPECTROMETRY [LARGE SCALE ANALYSIS]</scope>
</reference>
<reference key="16">
    <citation type="journal article" date="2012" name="Protein Cell">
        <title>Human Bop is a novel BH3-only member of the Bcl-2 protein family.</title>
        <authorList>
            <person name="Zhang X."/>
            <person name="Weng C."/>
            <person name="Li Y."/>
            <person name="Wang X."/>
            <person name="Jiang C."/>
            <person name="Li X."/>
            <person name="Xu Y."/>
            <person name="Chen Q."/>
            <person name="Pan L."/>
            <person name="Tang H."/>
        </authorList>
    </citation>
    <scope>INTERACTION WITH RTL10/BOP</scope>
</reference>
<reference key="17">
    <citation type="journal article" date="2014" name="J. Biol. Chem.">
        <title>Plasminogen kringle 5 induces endothelial cell apoptosis by triggering a voltage-dependent anion channel 1 (VDAC1) positive feedback loop.</title>
        <authorList>
            <person name="Li L."/>
            <person name="Yao Y.C."/>
            <person name="Gu X.Q."/>
            <person name="Che D."/>
            <person name="Ma C.Q."/>
            <person name="Dai Z.Y."/>
            <person name="Li C."/>
            <person name="Zhou T."/>
            <person name="Cai W.B."/>
            <person name="Yang Z.H."/>
            <person name="Yang X."/>
            <person name="Gao G.Q."/>
        </authorList>
    </citation>
    <scope>INTERACTION WITH VDAC1</scope>
</reference>
<reference key="18">
    <citation type="journal article" date="2015" name="Proteomics">
        <title>N-terminome analysis of the human mitochondrial proteome.</title>
        <authorList>
            <person name="Vaca Jacome A.S."/>
            <person name="Rabilloud T."/>
            <person name="Schaeffer-Reiss C."/>
            <person name="Rompais M."/>
            <person name="Ayoub D."/>
            <person name="Lane L."/>
            <person name="Bairoch A."/>
            <person name="Van Dorsselaer A."/>
            <person name="Carapito C."/>
        </authorList>
    </citation>
    <scope>ACETYLATION [LARGE SCALE ANALYSIS] AT ALA-2</scope>
    <scope>CLEAVAGE OF INITIATOR METHIONINE [LARGE SCALE ANALYSIS]</scope>
    <scope>IDENTIFICATION BY MASS SPECTROMETRY [LARGE SCALE ANALYSIS]</scope>
</reference>
<reference key="19">
    <citation type="journal article" date="2018" name="Cell. Death. Discov.">
        <title>PLEKHN1 promotes apoptosis by enhancing Bax-Bak hetero-oligomerization through interaction with Bid in human colon cancer.</title>
        <authorList>
            <person name="Kuriyama S."/>
            <person name="Tsuji T."/>
            <person name="Sakuma T."/>
            <person name="Yamamoto T."/>
            <person name="Tanaka M."/>
        </authorList>
    </citation>
    <scope>SUBCELLULAR LOCATION</scope>
    <scope>SUBUNIT</scope>
</reference>
<reference key="20">
    <citation type="journal article" date="1997" name="Science">
        <title>Structure of Bcl-xL-Bak peptide complex: recognition between regulators of apoptosis.</title>
        <authorList>
            <person name="Sattler M."/>
            <person name="Liang H."/>
            <person name="Nettesheim D."/>
            <person name="Meadows R.P."/>
            <person name="Harlan J.E."/>
            <person name="Eberstadt M."/>
            <person name="Yoon H.S."/>
            <person name="Shuker S.B."/>
            <person name="Chang B.S."/>
            <person name="Minn A.J."/>
            <person name="Thompson C.B."/>
            <person name="Fesik S.W."/>
        </authorList>
    </citation>
    <scope>STRUCTURE BY NMR OF 72-87 IN COMPLEX WITH BCL2L1 ISOFORM BCL-X(L)</scope>
</reference>
<reference key="21">
    <citation type="journal article" date="2006" name="Mol. Cell">
        <title>The X-ray structure of a BAK homodimer reveals an inhibitory zinc binding site.</title>
        <authorList>
            <person name="Moldoveanu T."/>
            <person name="Liu Q."/>
            <person name="Tocilj A."/>
            <person name="Watson M."/>
            <person name="Shore G."/>
            <person name="Gehring K."/>
        </authorList>
    </citation>
    <scope>X-RAY CRYSTALLOGRAPHY (1.48 ANGSTROMS) OF 16-186</scope>
    <scope>FUNCTION</scope>
    <scope>SUBUNIT</scope>
    <scope>MUTAGENESIS OF HIS-164</scope>
    <scope>ZINC-BINDING</scope>
</reference>
<reference key="22">
    <citation type="journal article" date="2007" name="Mol. Cell">
        <title>A structural viral mimic of prosurvival Bcl-2: a pivotal role for sequestering proapoptotic Bax and Bak.</title>
        <authorList>
            <person name="Kvansakul M."/>
            <person name="van Delft M.F."/>
            <person name="Lee E.F."/>
            <person name="Gulbis J.M."/>
            <person name="Fairlie W.D."/>
            <person name="Huang D.C.S."/>
            <person name="Colman P.M."/>
        </authorList>
    </citation>
    <scope>X-RAY CRYSTALLOGRAPHY (2.41 ANGSTROMS) OF 67-92 IN COMPLEX WITH MYXOMA VIRUS PROTEIN M11L</scope>
</reference>
<reference key="23">
    <citation type="submission" date="2008-04" db="PDB data bank">
        <title>Crystal structure of MS0836.</title>
        <authorList>
            <consortium name="RIKEN structural genomics initiative (RSGI)"/>
        </authorList>
    </citation>
    <scope>X-RAY CRYSTALLOGRAPHY (2.5 ANGSTROMS)</scope>
</reference>
<dbReference type="EMBL" id="X84213">
    <property type="protein sequence ID" value="CAA58997.1"/>
    <property type="molecule type" value="mRNA"/>
</dbReference>
<dbReference type="EMBL" id="U23765">
    <property type="protein sequence ID" value="AAA93066.1"/>
    <property type="molecule type" value="mRNA"/>
</dbReference>
<dbReference type="EMBL" id="U16811">
    <property type="protein sequence ID" value="AAA74466.1"/>
    <property type="molecule type" value="mRNA"/>
</dbReference>
<dbReference type="EMBL" id="AY260471">
    <property type="protein sequence ID" value="AAO74828.1"/>
    <property type="molecule type" value="Genomic_DNA"/>
</dbReference>
<dbReference type="EMBL" id="CR457419">
    <property type="protein sequence ID" value="CAG33700.1"/>
    <property type="molecule type" value="mRNA"/>
</dbReference>
<dbReference type="EMBL" id="Z93017">
    <property type="status" value="NOT_ANNOTATED_CDS"/>
    <property type="molecule type" value="Genomic_DNA"/>
</dbReference>
<dbReference type="EMBL" id="CH471081">
    <property type="protein sequence ID" value="EAX03740.1"/>
    <property type="molecule type" value="Genomic_DNA"/>
</dbReference>
<dbReference type="EMBL" id="CH471081">
    <property type="protein sequence ID" value="EAX03742.1"/>
    <property type="molecule type" value="Genomic_DNA"/>
</dbReference>
<dbReference type="EMBL" id="BC004431">
    <property type="protein sequence ID" value="AAH04431.1"/>
    <property type="molecule type" value="mRNA"/>
</dbReference>
<dbReference type="EMBL" id="BC110337">
    <property type="protein sequence ID" value="AAI10338.1"/>
    <property type="molecule type" value="mRNA"/>
</dbReference>
<dbReference type="EMBL" id="D88397">
    <property type="protein sequence ID" value="BAA13606.1"/>
    <property type="molecule type" value="Genomic_DNA"/>
</dbReference>
<dbReference type="CCDS" id="CCDS4781.1">
    <molecule id="Q16611-1"/>
</dbReference>
<dbReference type="PIR" id="S58873">
    <property type="entry name" value="S58873"/>
</dbReference>
<dbReference type="RefSeq" id="NP_001179.1">
    <molecule id="Q16611-1"/>
    <property type="nucleotide sequence ID" value="NM_001188.4"/>
</dbReference>
<dbReference type="RefSeq" id="XP_011513081.1">
    <molecule id="Q16611-1"/>
    <property type="nucleotide sequence ID" value="XM_011514779.4"/>
</dbReference>
<dbReference type="RefSeq" id="XP_054212099.1">
    <molecule id="Q16611-1"/>
    <property type="nucleotide sequence ID" value="XM_054356124.1"/>
</dbReference>
<dbReference type="PDB" id="1BXL">
    <property type="method" value="NMR"/>
    <property type="chains" value="B=72-87"/>
</dbReference>
<dbReference type="PDB" id="2IMS">
    <property type="method" value="X-ray"/>
    <property type="resolution" value="1.48 A"/>
    <property type="chains" value="A=16-186"/>
</dbReference>
<dbReference type="PDB" id="2IMT">
    <property type="method" value="X-ray"/>
    <property type="resolution" value="1.49 A"/>
    <property type="chains" value="A=16-186"/>
</dbReference>
<dbReference type="PDB" id="2JBY">
    <property type="method" value="X-ray"/>
    <property type="resolution" value="2.41 A"/>
    <property type="chains" value="B=67-92"/>
</dbReference>
<dbReference type="PDB" id="2JCN">
    <property type="method" value="X-ray"/>
    <property type="resolution" value="1.80 A"/>
    <property type="chains" value="A=21-190"/>
</dbReference>
<dbReference type="PDB" id="2LP8">
    <property type="method" value="NMR"/>
    <property type="chains" value="B=72-87"/>
</dbReference>
<dbReference type="PDB" id="2M5B">
    <property type="method" value="NMR"/>
    <property type="chains" value="A=18-186"/>
</dbReference>
<dbReference type="PDB" id="2XPX">
    <property type="method" value="X-ray"/>
    <property type="resolution" value="2.05 A"/>
    <property type="chains" value="B=67-92"/>
</dbReference>
<dbReference type="PDB" id="2YV6">
    <property type="method" value="X-ray"/>
    <property type="resolution" value="2.50 A"/>
    <property type="chains" value="A=23-185"/>
</dbReference>
<dbReference type="PDB" id="3I1H">
    <property type="method" value="X-ray"/>
    <property type="resolution" value="2.20 A"/>
    <property type="chains" value="B=72-87"/>
</dbReference>
<dbReference type="PDB" id="3QBR">
    <property type="method" value="X-ray"/>
    <property type="resolution" value="2.60 A"/>
    <property type="chains" value="B/Y=63-96"/>
</dbReference>
<dbReference type="PDB" id="4D2L">
    <property type="method" value="X-ray"/>
    <property type="resolution" value="2.90 A"/>
    <property type="chains" value="B=67-91"/>
</dbReference>
<dbReference type="PDB" id="4U2U">
    <property type="method" value="X-ray"/>
    <property type="resolution" value="2.90 A"/>
    <property type="chains" value="A/B=23-186"/>
</dbReference>
<dbReference type="PDB" id="4U2V">
    <property type="method" value="X-ray"/>
    <property type="resolution" value="2.30 A"/>
    <property type="chains" value="A/B/C/D=68-148"/>
</dbReference>
<dbReference type="PDB" id="4UF1">
    <property type="method" value="X-ray"/>
    <property type="resolution" value="2.30 A"/>
    <property type="chains" value="B=67-92"/>
</dbReference>
<dbReference type="PDB" id="5AJK">
    <property type="method" value="X-ray"/>
    <property type="resolution" value="2.55 A"/>
    <property type="chains" value="B/D/F/H/J/L=67-92"/>
</dbReference>
<dbReference type="PDB" id="5FMI">
    <property type="method" value="X-ray"/>
    <property type="resolution" value="1.49 A"/>
    <property type="chains" value="A=23-184"/>
</dbReference>
<dbReference type="PDB" id="5FMK">
    <property type="method" value="X-ray"/>
    <property type="resolution" value="1.73 A"/>
    <property type="chains" value="B=63-96"/>
</dbReference>
<dbReference type="PDB" id="5VWV">
    <property type="method" value="X-ray"/>
    <property type="resolution" value="1.90 A"/>
    <property type="chains" value="A=23-186"/>
</dbReference>
<dbReference type="PDB" id="5VWW">
    <property type="method" value="X-ray"/>
    <property type="resolution" value="2.80 A"/>
    <property type="chains" value="A/B=23-186"/>
</dbReference>
<dbReference type="PDB" id="5VWX">
    <property type="method" value="X-ray"/>
    <property type="resolution" value="2.49 A"/>
    <property type="chains" value="A/C=23-186"/>
</dbReference>
<dbReference type="PDB" id="5VWY">
    <property type="method" value="X-ray"/>
    <property type="resolution" value="1.55 A"/>
    <property type="chains" value="A=23-186"/>
</dbReference>
<dbReference type="PDB" id="5VWZ">
    <property type="method" value="X-ray"/>
    <property type="resolution" value="1.62 A"/>
    <property type="chains" value="A/C=23-186"/>
</dbReference>
<dbReference type="PDB" id="5VX0">
    <property type="method" value="X-ray"/>
    <property type="resolution" value="1.60 A"/>
    <property type="chains" value="A/C=23-186"/>
</dbReference>
<dbReference type="PDB" id="5VX1">
    <property type="method" value="X-ray"/>
    <property type="resolution" value="1.22 A"/>
    <property type="chains" value="A/B=23-186"/>
</dbReference>
<dbReference type="PDB" id="6ODH">
    <property type="method" value="X-ray"/>
    <property type="resolution" value="2.30 A"/>
    <property type="chains" value="A/B/C/D/E/F=71-147"/>
</dbReference>
<dbReference type="PDB" id="6UXM">
    <property type="method" value="X-ray"/>
    <property type="resolution" value="2.49 A"/>
    <property type="chains" value="A/B/C/D/E/F=68-148"/>
</dbReference>
<dbReference type="PDB" id="6UXN">
    <property type="method" value="X-ray"/>
    <property type="resolution" value="2.49 A"/>
    <property type="chains" value="A/B/C/D/E/F/G/H/I/J/K/L=68-148"/>
</dbReference>
<dbReference type="PDB" id="6UXO">
    <property type="method" value="X-ray"/>
    <property type="resolution" value="1.80 A"/>
    <property type="chains" value="A/B/C/D/E/F/G/H/I/J/K/L=68-148"/>
</dbReference>
<dbReference type="PDB" id="6UXP">
    <property type="method" value="X-ray"/>
    <property type="resolution" value="2.49 A"/>
    <property type="chains" value="A/B/C/D/E/F/G/H=68-148"/>
</dbReference>
<dbReference type="PDB" id="6UXQ">
    <property type="method" value="X-ray"/>
    <property type="resolution" value="1.70 A"/>
    <property type="chains" value="A/B/C/D=68-148"/>
</dbReference>
<dbReference type="PDB" id="6UXR">
    <property type="method" value="X-ray"/>
    <property type="resolution" value="1.80 A"/>
    <property type="chains" value="A/B=68-148"/>
</dbReference>
<dbReference type="PDB" id="7K02">
    <property type="method" value="X-ray"/>
    <property type="resolution" value="3.40 A"/>
    <property type="chains" value="A/B/C/D/E/F=67-186"/>
</dbReference>
<dbReference type="PDB" id="7LK4">
    <property type="method" value="X-ray"/>
    <property type="resolution" value="3.10 A"/>
    <property type="chains" value="P/Q/R/S=23-186"/>
</dbReference>
<dbReference type="PDB" id="7M5A">
    <property type="method" value="X-ray"/>
    <property type="resolution" value="1.50 A"/>
    <property type="chains" value="A=21-186"/>
</dbReference>
<dbReference type="PDB" id="7M5B">
    <property type="method" value="X-ray"/>
    <property type="resolution" value="1.85 A"/>
    <property type="chains" value="A/C=21-186"/>
</dbReference>
<dbReference type="PDB" id="7OFM">
    <property type="method" value="NMR"/>
    <property type="chains" value="A=183-211"/>
</dbReference>
<dbReference type="PDB" id="7OFO">
    <property type="method" value="NMR"/>
    <property type="chains" value="A=183-211"/>
</dbReference>
<dbReference type="PDB" id="8CZF">
    <property type="method" value="X-ray"/>
    <property type="resolution" value="1.30 A"/>
    <property type="chains" value="A=23-186"/>
</dbReference>
<dbReference type="PDB" id="8CZG">
    <property type="method" value="X-ray"/>
    <property type="resolution" value="1.99 A"/>
    <property type="chains" value="A/B/C/D=23-186"/>
</dbReference>
<dbReference type="PDB" id="8CZH">
    <property type="method" value="X-ray"/>
    <property type="resolution" value="1.30 A"/>
    <property type="chains" value="A=23-186"/>
</dbReference>
<dbReference type="PDB" id="8GSV">
    <property type="method" value="X-ray"/>
    <property type="resolution" value="2.20 A"/>
    <property type="chains" value="A/C/E/G/I/K/M/O/Q/S/U/W=23-185"/>
</dbReference>
<dbReference type="PDB" id="8IGC">
    <property type="method" value="X-ray"/>
    <property type="resolution" value="1.70 A"/>
    <property type="chains" value="A=23-183"/>
</dbReference>
<dbReference type="PDB" id="8IVB">
    <property type="method" value="NMR"/>
    <property type="chains" value="B=18-186"/>
</dbReference>
<dbReference type="PDB" id="8SRX">
    <property type="method" value="X-ray"/>
    <property type="resolution" value="2.09 A"/>
    <property type="chains" value="A/C=68-146"/>
</dbReference>
<dbReference type="PDB" id="8SRY">
    <property type="method" value="X-ray"/>
    <property type="resolution" value="2.40 A"/>
    <property type="chains" value="A/C=68-146"/>
</dbReference>
<dbReference type="PDB" id="8UKY">
    <property type="method" value="X-ray"/>
    <property type="resolution" value="2.40 A"/>
    <property type="chains" value="C/D=23-186"/>
</dbReference>
<dbReference type="PDB" id="8Y1Y">
    <property type="method" value="X-ray"/>
    <property type="resolution" value="2.01 A"/>
    <property type="chains" value="B=72-92"/>
</dbReference>
<dbReference type="PDB" id="8Y1Z">
    <property type="method" value="X-ray"/>
    <property type="resolution" value="1.91 A"/>
    <property type="chains" value="B=72-87"/>
</dbReference>
<dbReference type="PDBsum" id="1BXL"/>
<dbReference type="PDBsum" id="2IMS"/>
<dbReference type="PDBsum" id="2IMT"/>
<dbReference type="PDBsum" id="2JBY"/>
<dbReference type="PDBsum" id="2JCN"/>
<dbReference type="PDBsum" id="2LP8"/>
<dbReference type="PDBsum" id="2M5B"/>
<dbReference type="PDBsum" id="2XPX"/>
<dbReference type="PDBsum" id="2YV6"/>
<dbReference type="PDBsum" id="3I1H"/>
<dbReference type="PDBsum" id="3QBR"/>
<dbReference type="PDBsum" id="4D2L"/>
<dbReference type="PDBsum" id="4U2U"/>
<dbReference type="PDBsum" id="4U2V"/>
<dbReference type="PDBsum" id="4UF1"/>
<dbReference type="PDBsum" id="5AJK"/>
<dbReference type="PDBsum" id="5FMI"/>
<dbReference type="PDBsum" id="5FMK"/>
<dbReference type="PDBsum" id="5VWV"/>
<dbReference type="PDBsum" id="5VWW"/>
<dbReference type="PDBsum" id="5VWX"/>
<dbReference type="PDBsum" id="5VWY"/>
<dbReference type="PDBsum" id="5VWZ"/>
<dbReference type="PDBsum" id="5VX0"/>
<dbReference type="PDBsum" id="5VX1"/>
<dbReference type="PDBsum" id="6ODH"/>
<dbReference type="PDBsum" id="6UXM"/>
<dbReference type="PDBsum" id="6UXN"/>
<dbReference type="PDBsum" id="6UXO"/>
<dbReference type="PDBsum" id="6UXP"/>
<dbReference type="PDBsum" id="6UXQ"/>
<dbReference type="PDBsum" id="6UXR"/>
<dbReference type="PDBsum" id="7K02"/>
<dbReference type="PDBsum" id="7LK4"/>
<dbReference type="PDBsum" id="7M5A"/>
<dbReference type="PDBsum" id="7M5B"/>
<dbReference type="PDBsum" id="7OFM"/>
<dbReference type="PDBsum" id="7OFO"/>
<dbReference type="PDBsum" id="8CZF"/>
<dbReference type="PDBsum" id="8CZG"/>
<dbReference type="PDBsum" id="8CZH"/>
<dbReference type="PDBsum" id="8GSV"/>
<dbReference type="PDBsum" id="8IGC"/>
<dbReference type="PDBsum" id="8IVB"/>
<dbReference type="PDBsum" id="8SRX"/>
<dbReference type="PDBsum" id="8SRY"/>
<dbReference type="PDBsum" id="8UKY"/>
<dbReference type="PDBsum" id="8Y1Y"/>
<dbReference type="PDBsum" id="8Y1Z"/>
<dbReference type="BMRB" id="Q16611"/>
<dbReference type="SMR" id="Q16611"/>
<dbReference type="BioGRID" id="107054">
    <property type="interactions" value="48"/>
</dbReference>
<dbReference type="ComplexPortal" id="CPX-1989">
    <property type="entry name" value="BAK1 oligomer"/>
</dbReference>
<dbReference type="ComplexPortal" id="CPX-860">
    <property type="entry name" value="BAK1-Bcl-X complex"/>
</dbReference>
<dbReference type="CORUM" id="Q16611"/>
<dbReference type="DIP" id="DIP-935N"/>
<dbReference type="ELM" id="Q16611"/>
<dbReference type="FunCoup" id="Q16611">
    <property type="interactions" value="313"/>
</dbReference>
<dbReference type="IntAct" id="Q16611">
    <property type="interactions" value="41"/>
</dbReference>
<dbReference type="MINT" id="Q16611"/>
<dbReference type="STRING" id="9606.ENSP00000363591"/>
<dbReference type="BindingDB" id="Q16611"/>
<dbReference type="ChEMBL" id="CHEMBL5609"/>
<dbReference type="TCDB" id="1.A.21.1.3">
    <property type="family name" value="the bcl-2 (bcl-2) family"/>
</dbReference>
<dbReference type="iPTMnet" id="Q16611"/>
<dbReference type="PhosphoSitePlus" id="Q16611"/>
<dbReference type="BioMuta" id="BAK1"/>
<dbReference type="DMDM" id="2493274"/>
<dbReference type="jPOST" id="Q16611"/>
<dbReference type="MassIVE" id="Q16611"/>
<dbReference type="PaxDb" id="9606-ENSP00000363591"/>
<dbReference type="PeptideAtlas" id="Q16611"/>
<dbReference type="ProteomicsDB" id="60948">
    <molecule id="Q16611-1"/>
</dbReference>
<dbReference type="ProteomicsDB" id="7574"/>
<dbReference type="Pumba" id="Q16611"/>
<dbReference type="TopDownProteomics" id="Q16611-1">
    <molecule id="Q16611-1"/>
</dbReference>
<dbReference type="Antibodypedia" id="3556">
    <property type="antibodies" value="757 antibodies from 45 providers"/>
</dbReference>
<dbReference type="DNASU" id="578"/>
<dbReference type="Ensembl" id="ENST00000374467.4">
    <molecule id="Q16611-1"/>
    <property type="protein sequence ID" value="ENSP00000363591.3"/>
    <property type="gene ID" value="ENSG00000030110.14"/>
</dbReference>
<dbReference type="Ensembl" id="ENST00000442998.6">
    <molecule id="Q16611-2"/>
    <property type="protein sequence ID" value="ENSP00000391258.2"/>
    <property type="gene ID" value="ENSG00000030110.14"/>
</dbReference>
<dbReference type="GeneID" id="578"/>
<dbReference type="KEGG" id="hsa:578"/>
<dbReference type="MANE-Select" id="ENST00000374467.4">
    <property type="protein sequence ID" value="ENSP00000363591.3"/>
    <property type="RefSeq nucleotide sequence ID" value="NM_001188.4"/>
    <property type="RefSeq protein sequence ID" value="NP_001179.1"/>
</dbReference>
<dbReference type="UCSC" id="uc003oes.4">
    <molecule id="Q16611-1"/>
    <property type="organism name" value="human"/>
</dbReference>
<dbReference type="AGR" id="HGNC:949"/>
<dbReference type="CTD" id="578"/>
<dbReference type="DisGeNET" id="578"/>
<dbReference type="GeneCards" id="BAK1"/>
<dbReference type="HGNC" id="HGNC:949">
    <property type="gene designation" value="BAK1"/>
</dbReference>
<dbReference type="HPA" id="ENSG00000030110">
    <property type="expression patterns" value="Low tissue specificity"/>
</dbReference>
<dbReference type="MIM" id="600516">
    <property type="type" value="gene"/>
</dbReference>
<dbReference type="neXtProt" id="NX_Q16611"/>
<dbReference type="OpenTargets" id="ENSG00000030110"/>
<dbReference type="PharmGKB" id="PA25253"/>
<dbReference type="VEuPathDB" id="HostDB:ENSG00000030110"/>
<dbReference type="eggNOG" id="KOG4728">
    <property type="taxonomic scope" value="Eukaryota"/>
</dbReference>
<dbReference type="GeneTree" id="ENSGT01130000278292"/>
<dbReference type="HOGENOM" id="CLU_145501_0_0_1"/>
<dbReference type="InParanoid" id="Q16611"/>
<dbReference type="OMA" id="HYIARWI"/>
<dbReference type="OrthoDB" id="6020735at2759"/>
<dbReference type="PAN-GO" id="Q16611">
    <property type="GO annotations" value="5 GO annotations based on evolutionary models"/>
</dbReference>
<dbReference type="PhylomeDB" id="Q16611"/>
<dbReference type="TreeFam" id="TF315834"/>
<dbReference type="PathwayCommons" id="Q16611"/>
<dbReference type="Reactome" id="R-HSA-111452">
    <property type="pathway name" value="Activation and oligomerization of BAK protein"/>
</dbReference>
<dbReference type="Reactome" id="R-HSA-111457">
    <property type="pathway name" value="Release of apoptotic factors from the mitochondria"/>
</dbReference>
<dbReference type="Reactome" id="R-HSA-5620971">
    <property type="pathway name" value="Pyroptosis"/>
</dbReference>
<dbReference type="SignaLink" id="Q16611"/>
<dbReference type="SIGNOR" id="Q16611"/>
<dbReference type="BioGRID-ORCS" id="578">
    <property type="hits" value="181 hits in 1132 CRISPR screens"/>
</dbReference>
<dbReference type="EvolutionaryTrace" id="Q16611"/>
<dbReference type="GeneWiki" id="Bcl-2_homologous_antagonist_killer"/>
<dbReference type="GenomeRNAi" id="578"/>
<dbReference type="Pharos" id="Q16611">
    <property type="development level" value="Tbio"/>
</dbReference>
<dbReference type="PRO" id="PR:Q16611"/>
<dbReference type="Proteomes" id="UP000005640">
    <property type="component" value="Chromosome 6"/>
</dbReference>
<dbReference type="RNAct" id="Q16611">
    <property type="molecule type" value="protein"/>
</dbReference>
<dbReference type="Bgee" id="ENSG00000030110">
    <property type="expression patterns" value="Expressed in mucosa of transverse colon and 123 other cell types or tissues"/>
</dbReference>
<dbReference type="ExpressionAtlas" id="Q16611">
    <property type="expression patterns" value="baseline and differential"/>
</dbReference>
<dbReference type="GO" id="GO:0097145">
    <property type="term" value="C:BAK complex"/>
    <property type="evidence" value="ECO:0000314"/>
    <property type="project" value="UniProtKB"/>
</dbReference>
<dbReference type="GO" id="GO:0097136">
    <property type="term" value="C:Bcl-2 family protein complex"/>
    <property type="evidence" value="ECO:0000314"/>
    <property type="project" value="ARUK-UCL"/>
</dbReference>
<dbReference type="GO" id="GO:0005829">
    <property type="term" value="C:cytosol"/>
    <property type="evidence" value="ECO:0007669"/>
    <property type="project" value="Ensembl"/>
</dbReference>
<dbReference type="GO" id="GO:0005783">
    <property type="term" value="C:endoplasmic reticulum"/>
    <property type="evidence" value="ECO:0007669"/>
    <property type="project" value="Ensembl"/>
</dbReference>
<dbReference type="GO" id="GO:0005741">
    <property type="term" value="C:mitochondrial outer membrane"/>
    <property type="evidence" value="ECO:0000314"/>
    <property type="project" value="UniProtKB"/>
</dbReference>
<dbReference type="GO" id="GO:0005739">
    <property type="term" value="C:mitochondrion"/>
    <property type="evidence" value="ECO:0000314"/>
    <property type="project" value="HGNC-UCL"/>
</dbReference>
<dbReference type="GO" id="GO:0046930">
    <property type="term" value="C:pore complex"/>
    <property type="evidence" value="ECO:0000314"/>
    <property type="project" value="HGNC-UCL"/>
</dbReference>
<dbReference type="GO" id="GO:0051400">
    <property type="term" value="F:BH domain binding"/>
    <property type="evidence" value="ECO:0007669"/>
    <property type="project" value="Ensembl"/>
</dbReference>
<dbReference type="GO" id="GO:0015267">
    <property type="term" value="F:channel activity"/>
    <property type="evidence" value="ECO:0000318"/>
    <property type="project" value="GO_Central"/>
</dbReference>
<dbReference type="GO" id="GO:0031072">
    <property type="term" value="F:heat shock protein binding"/>
    <property type="evidence" value="ECO:0007669"/>
    <property type="project" value="Ensembl"/>
</dbReference>
<dbReference type="GO" id="GO:0042802">
    <property type="term" value="F:identical protein binding"/>
    <property type="evidence" value="ECO:0000353"/>
    <property type="project" value="IntAct"/>
</dbReference>
<dbReference type="GO" id="GO:0046872">
    <property type="term" value="F:metal ion binding"/>
    <property type="evidence" value="ECO:0007669"/>
    <property type="project" value="UniProtKB-KW"/>
</dbReference>
<dbReference type="GO" id="GO:0015288">
    <property type="term" value="F:porin activity"/>
    <property type="evidence" value="ECO:0000314"/>
    <property type="project" value="UniProt"/>
</dbReference>
<dbReference type="GO" id="GO:0046982">
    <property type="term" value="F:protein heterodimerization activity"/>
    <property type="evidence" value="ECO:0000353"/>
    <property type="project" value="UniProtKB"/>
</dbReference>
<dbReference type="GO" id="GO:0042803">
    <property type="term" value="F:protein homodimerization activity"/>
    <property type="evidence" value="ECO:0000314"/>
    <property type="project" value="UniProtKB"/>
</dbReference>
<dbReference type="GO" id="GO:0044877">
    <property type="term" value="F:protein-containing complex binding"/>
    <property type="evidence" value="ECO:0007669"/>
    <property type="project" value="Ensembl"/>
</dbReference>
<dbReference type="GO" id="GO:0051087">
    <property type="term" value="F:protein-folding chaperone binding"/>
    <property type="evidence" value="ECO:0007669"/>
    <property type="project" value="Ensembl"/>
</dbReference>
<dbReference type="GO" id="GO:0044325">
    <property type="term" value="F:transmembrane transporter binding"/>
    <property type="evidence" value="ECO:0000353"/>
    <property type="project" value="UniProtKB"/>
</dbReference>
<dbReference type="GO" id="GO:0031100">
    <property type="term" value="P:animal organ regeneration"/>
    <property type="evidence" value="ECO:0007669"/>
    <property type="project" value="Ensembl"/>
</dbReference>
<dbReference type="GO" id="GO:0006915">
    <property type="term" value="P:apoptotic process"/>
    <property type="evidence" value="ECO:0000314"/>
    <property type="project" value="UniProtKB"/>
</dbReference>
<dbReference type="GO" id="GO:1902262">
    <property type="term" value="P:apoptotic process involved in blood vessel morphogenesis"/>
    <property type="evidence" value="ECO:0007669"/>
    <property type="project" value="Ensembl"/>
</dbReference>
<dbReference type="GO" id="GO:0097190">
    <property type="term" value="P:apoptotic signaling pathway"/>
    <property type="evidence" value="ECO:0000315"/>
    <property type="project" value="UniProtKB"/>
</dbReference>
<dbReference type="GO" id="GO:0001783">
    <property type="term" value="P:B cell apoptotic process"/>
    <property type="evidence" value="ECO:0007669"/>
    <property type="project" value="Ensembl"/>
</dbReference>
<dbReference type="GO" id="GO:0001782">
    <property type="term" value="P:B cell homeostasis"/>
    <property type="evidence" value="ECO:0007669"/>
    <property type="project" value="Ensembl"/>
</dbReference>
<dbReference type="GO" id="GO:0002352">
    <property type="term" value="P:B cell negative selection"/>
    <property type="evidence" value="ECO:0007669"/>
    <property type="project" value="Ensembl"/>
</dbReference>
<dbReference type="GO" id="GO:0001974">
    <property type="term" value="P:blood vessel remodeling"/>
    <property type="evidence" value="ECO:0007669"/>
    <property type="project" value="Ensembl"/>
</dbReference>
<dbReference type="GO" id="GO:0060402">
    <property type="term" value="P:calcium ion transport into cytosol"/>
    <property type="evidence" value="ECO:0007669"/>
    <property type="project" value="Ensembl"/>
</dbReference>
<dbReference type="GO" id="GO:0071260">
    <property type="term" value="P:cellular response to mechanical stimulus"/>
    <property type="evidence" value="ECO:0000270"/>
    <property type="project" value="UniProtKB"/>
</dbReference>
<dbReference type="GO" id="GO:0034620">
    <property type="term" value="P:cellular response to unfolded protein"/>
    <property type="evidence" value="ECO:0000304"/>
    <property type="project" value="ParkinsonsUK-UCL"/>
</dbReference>
<dbReference type="GO" id="GO:0034644">
    <property type="term" value="P:cellular response to UV"/>
    <property type="evidence" value="ECO:0000315"/>
    <property type="project" value="UniProtKB"/>
</dbReference>
<dbReference type="GO" id="GO:0031018">
    <property type="term" value="P:endocrine pancreas development"/>
    <property type="evidence" value="ECO:0007669"/>
    <property type="project" value="Ensembl"/>
</dbReference>
<dbReference type="GO" id="GO:0032469">
    <property type="term" value="P:endoplasmic reticulum calcium ion homeostasis"/>
    <property type="evidence" value="ECO:0000304"/>
    <property type="project" value="UniProtKB"/>
</dbReference>
<dbReference type="GO" id="GO:0050673">
    <property type="term" value="P:epithelial cell proliferation"/>
    <property type="evidence" value="ECO:0007669"/>
    <property type="project" value="Ensembl"/>
</dbReference>
<dbReference type="GO" id="GO:0051649">
    <property type="term" value="P:establishment of localization in cell"/>
    <property type="evidence" value="ECO:0007669"/>
    <property type="project" value="Ensembl"/>
</dbReference>
<dbReference type="GO" id="GO:0010248">
    <property type="term" value="P:establishment or maintenance of transmembrane electrochemical gradient"/>
    <property type="evidence" value="ECO:0000314"/>
    <property type="project" value="HGNC-UCL"/>
</dbReference>
<dbReference type="GO" id="GO:0097192">
    <property type="term" value="P:extrinsic apoptotic signaling pathway in absence of ligand"/>
    <property type="evidence" value="ECO:0000318"/>
    <property type="project" value="GO_Central"/>
</dbReference>
<dbReference type="GO" id="GO:0044346">
    <property type="term" value="P:fibroblast apoptotic process"/>
    <property type="evidence" value="ECO:0007669"/>
    <property type="project" value="Ensembl"/>
</dbReference>
<dbReference type="GO" id="GO:0097193">
    <property type="term" value="P:intrinsic apoptotic signaling pathway"/>
    <property type="evidence" value="ECO:0000314"/>
    <property type="project" value="UniProt"/>
</dbReference>
<dbReference type="GO" id="GO:0008630">
    <property type="term" value="P:intrinsic apoptotic signaling pathway in response to DNA damage"/>
    <property type="evidence" value="ECO:0000318"/>
    <property type="project" value="GO_Central"/>
</dbReference>
<dbReference type="GO" id="GO:0070059">
    <property type="term" value="P:intrinsic apoptotic signaling pathway in response to endoplasmic reticulum stress"/>
    <property type="evidence" value="ECO:0000304"/>
    <property type="project" value="ParkinsonsUK-UCL"/>
</dbReference>
<dbReference type="GO" id="GO:0035108">
    <property type="term" value="P:limb morphogenesis"/>
    <property type="evidence" value="ECO:0007669"/>
    <property type="project" value="Ensembl"/>
</dbReference>
<dbReference type="GO" id="GO:0008053">
    <property type="term" value="P:mitochondrial fusion"/>
    <property type="evidence" value="ECO:0007669"/>
    <property type="project" value="Ensembl"/>
</dbReference>
<dbReference type="GO" id="GO:0002262">
    <property type="term" value="P:myeloid cell homeostasis"/>
    <property type="evidence" value="ECO:0007669"/>
    <property type="project" value="Ensembl"/>
</dbReference>
<dbReference type="GO" id="GO:0008285">
    <property type="term" value="P:negative regulation of cell population proliferation"/>
    <property type="evidence" value="ECO:0007669"/>
    <property type="project" value="Ensembl"/>
</dbReference>
<dbReference type="GO" id="GO:0032471">
    <property type="term" value="P:negative regulation of endoplasmic reticulum calcium ion concentration"/>
    <property type="evidence" value="ECO:0007669"/>
    <property type="project" value="Ensembl"/>
</dbReference>
<dbReference type="GO" id="GO:0010629">
    <property type="term" value="P:negative regulation of gene expression"/>
    <property type="evidence" value="ECO:0007669"/>
    <property type="project" value="Ensembl"/>
</dbReference>
<dbReference type="GO" id="GO:1901029">
    <property type="term" value="P:negative regulation of mitochondrial outer membrane permeabilization involved in apoptotic signaling pathway"/>
    <property type="evidence" value="ECO:0000314"/>
    <property type="project" value="ComplexPortal"/>
</dbReference>
<dbReference type="GO" id="GO:0090201">
    <property type="term" value="P:negative regulation of release of cytochrome c from mitochondria"/>
    <property type="evidence" value="ECO:0000314"/>
    <property type="project" value="ComplexPortal"/>
</dbReference>
<dbReference type="GO" id="GO:0043065">
    <property type="term" value="P:positive regulation of apoptotic process"/>
    <property type="evidence" value="ECO:0000315"/>
    <property type="project" value="UniProtKB"/>
</dbReference>
<dbReference type="GO" id="GO:0010524">
    <property type="term" value="P:positive regulation of calcium ion transport into cytosol"/>
    <property type="evidence" value="ECO:0007669"/>
    <property type="project" value="Ensembl"/>
</dbReference>
<dbReference type="GO" id="GO:1903896">
    <property type="term" value="P:positive regulation of IRE1-mediated unfolded protein response"/>
    <property type="evidence" value="ECO:0000304"/>
    <property type="project" value="ParkinsonsUK-UCL"/>
</dbReference>
<dbReference type="GO" id="GO:1901030">
    <property type="term" value="P:positive regulation of mitochondrial outer membrane permeabilization involved in apoptotic signaling pathway"/>
    <property type="evidence" value="ECO:0000303"/>
    <property type="project" value="ComplexPortal"/>
</dbReference>
<dbReference type="GO" id="GO:0031334">
    <property type="term" value="P:positive regulation of protein-containing complex assembly"/>
    <property type="evidence" value="ECO:0000314"/>
    <property type="project" value="HGNC-UCL"/>
</dbReference>
<dbReference type="GO" id="GO:0045862">
    <property type="term" value="P:positive regulation of proteolysis"/>
    <property type="evidence" value="ECO:0000314"/>
    <property type="project" value="BHF-UCL"/>
</dbReference>
<dbReference type="GO" id="GO:0090200">
    <property type="term" value="P:positive regulation of release of cytochrome c from mitochondria"/>
    <property type="evidence" value="ECO:0000303"/>
    <property type="project" value="ComplexPortal"/>
</dbReference>
<dbReference type="GO" id="GO:0048597">
    <property type="term" value="P:post-embryonic camera-type eye morphogenesis"/>
    <property type="evidence" value="ECO:0007669"/>
    <property type="project" value="Ensembl"/>
</dbReference>
<dbReference type="GO" id="GO:0051726">
    <property type="term" value="P:regulation of cell cycle"/>
    <property type="evidence" value="ECO:0007669"/>
    <property type="project" value="Ensembl"/>
</dbReference>
<dbReference type="GO" id="GO:0046902">
    <property type="term" value="P:regulation of mitochondrial membrane permeability"/>
    <property type="evidence" value="ECO:0000314"/>
    <property type="project" value="BHF-UCL"/>
</dbReference>
<dbReference type="GO" id="GO:0051881">
    <property type="term" value="P:regulation of mitochondrial membrane potential"/>
    <property type="evidence" value="ECO:0000314"/>
    <property type="project" value="HGNC-UCL"/>
</dbReference>
<dbReference type="GO" id="GO:0001836">
    <property type="term" value="P:release of cytochrome c from mitochondria"/>
    <property type="evidence" value="ECO:0000314"/>
    <property type="project" value="BHF-UCL"/>
</dbReference>
<dbReference type="GO" id="GO:0045471">
    <property type="term" value="P:response to ethanol"/>
    <property type="evidence" value="ECO:0007669"/>
    <property type="project" value="Ensembl"/>
</dbReference>
<dbReference type="GO" id="GO:0009620">
    <property type="term" value="P:response to fungus"/>
    <property type="evidence" value="ECO:0007669"/>
    <property type="project" value="Ensembl"/>
</dbReference>
<dbReference type="GO" id="GO:0010332">
    <property type="term" value="P:response to gamma radiation"/>
    <property type="evidence" value="ECO:0007669"/>
    <property type="project" value="Ensembl"/>
</dbReference>
<dbReference type="GO" id="GO:0042542">
    <property type="term" value="P:response to hydrogen peroxide"/>
    <property type="evidence" value="ECO:0007669"/>
    <property type="project" value="Ensembl"/>
</dbReference>
<dbReference type="GO" id="GO:0010046">
    <property type="term" value="P:response to mycotoxin"/>
    <property type="evidence" value="ECO:0007669"/>
    <property type="project" value="Ensembl"/>
</dbReference>
<dbReference type="GO" id="GO:0010225">
    <property type="term" value="P:response to UV-C"/>
    <property type="evidence" value="ECO:0007669"/>
    <property type="project" value="Ensembl"/>
</dbReference>
<dbReference type="GO" id="GO:0009410">
    <property type="term" value="P:response to xenobiotic stimulus"/>
    <property type="evidence" value="ECO:0007669"/>
    <property type="project" value="Ensembl"/>
</dbReference>
<dbReference type="GO" id="GO:0070242">
    <property type="term" value="P:thymocyte apoptotic process"/>
    <property type="evidence" value="ECO:0007669"/>
    <property type="project" value="Ensembl"/>
</dbReference>
<dbReference type="GO" id="GO:0060068">
    <property type="term" value="P:vagina development"/>
    <property type="evidence" value="ECO:0007669"/>
    <property type="project" value="Ensembl"/>
</dbReference>
<dbReference type="CDD" id="cd06845">
    <property type="entry name" value="Bcl-2_like"/>
    <property type="match status" value="1"/>
</dbReference>
<dbReference type="DisProt" id="DP02539"/>
<dbReference type="FunFam" id="1.10.437.10:FF:000007">
    <property type="entry name" value="bcl-2 homologous antagonist/killer"/>
    <property type="match status" value="1"/>
</dbReference>
<dbReference type="Gene3D" id="1.10.437.10">
    <property type="entry name" value="Blc2-like"/>
    <property type="match status" value="1"/>
</dbReference>
<dbReference type="InterPro" id="IPR036834">
    <property type="entry name" value="Bcl-2-like_sf"/>
</dbReference>
<dbReference type="InterPro" id="IPR046371">
    <property type="entry name" value="Bcl-2_BH1-3"/>
</dbReference>
<dbReference type="InterPro" id="IPR026298">
    <property type="entry name" value="Bcl-2_fam"/>
</dbReference>
<dbReference type="InterPro" id="IPR002475">
    <property type="entry name" value="Bcl2-like"/>
</dbReference>
<dbReference type="InterPro" id="IPR020717">
    <property type="entry name" value="Bcl2_BH1_motif_CS"/>
</dbReference>
<dbReference type="InterPro" id="IPR020726">
    <property type="entry name" value="Bcl2_BH2_motif_CS"/>
</dbReference>
<dbReference type="InterPro" id="IPR020728">
    <property type="entry name" value="Bcl2_BH3_motif_CS"/>
</dbReference>
<dbReference type="PANTHER" id="PTHR11256:SF59">
    <property type="entry name" value="BCL-2 HOMOLOGOUS ANTAGONIST_KILLER"/>
    <property type="match status" value="1"/>
</dbReference>
<dbReference type="PANTHER" id="PTHR11256">
    <property type="entry name" value="BCL-2 RELATED"/>
    <property type="match status" value="1"/>
</dbReference>
<dbReference type="Pfam" id="PF00452">
    <property type="entry name" value="Bcl-2"/>
    <property type="match status" value="1"/>
</dbReference>
<dbReference type="PRINTS" id="PR01862">
    <property type="entry name" value="BCL2FAMILY"/>
</dbReference>
<dbReference type="SMART" id="SM00337">
    <property type="entry name" value="BCL"/>
    <property type="match status" value="1"/>
</dbReference>
<dbReference type="SUPFAM" id="SSF56854">
    <property type="entry name" value="Bcl-2 inhibitors of programmed cell death"/>
    <property type="match status" value="1"/>
</dbReference>
<dbReference type="PROSITE" id="PS50062">
    <property type="entry name" value="BCL2_FAMILY"/>
    <property type="match status" value="1"/>
</dbReference>
<dbReference type="PROSITE" id="PS01080">
    <property type="entry name" value="BH1"/>
    <property type="match status" value="1"/>
</dbReference>
<dbReference type="PROSITE" id="PS01258">
    <property type="entry name" value="BH2"/>
    <property type="match status" value="1"/>
</dbReference>
<dbReference type="PROSITE" id="PS01259">
    <property type="entry name" value="BH3"/>
    <property type="match status" value="1"/>
</dbReference>
<sequence>MASGQGPGPPRQECGEPALPSASEEQVAQDTEEVFRSYVFYRHQQEQEAEGVAAPADPEMVTLPLQPSSTMGQVGRQLAIIGDDINRRYDSEFQTMLQHLQPTAENAYEYFTKIATSLFESGINWGRVVALLGFGYRLALHVYQHGLTGFLGQVTRFVVDFMLHHCIARWIAQRGGWVAALNLGNGPILNVLVVLGVVLLGQFVVRRFFKS</sequence>
<comment type="function">
    <text evidence="7 13">Plays a role in the mitochondrial apoptotic process. Upon arrival of cell death signals, promotes mitochondrial outer membrane (MOM) permeabilization by oligomerizing to form pores within the MOM. This releases apoptogenic factors into the cytosol, including cytochrome c, promoting the activation of caspase 9 which in turn processes and activates the effector caspases.</text>
</comment>
<comment type="subunit">
    <text evidence="1 6 7 9 10 11 14">Homodimer. Formation of the homodimer is zinc-dependent (PubMed:17157251). Forms heterodimers with BCL2 and BCL2L1 isoform Bcl-X(L) (PubMed:9020082). Forms heterooligomers with BAX (PubMed:29531808). Interacts with BCL2A1 (By similarity). Interacts with RTL10/BOP (PubMed:23055042). Interacts with VDAC1 (PubMed:25296756). Interacts with GIMAP3/IAN4 and GIMAP5/IAN5 (PubMed:16509771).</text>
</comment>
<comment type="subunit">
    <text evidence="5">(Microbial infection) Interacts with vaccinia virus protein F1.</text>
</comment>
<comment type="subunit">
    <text evidence="8">(Microbial infection) Interacts with myxoma virus protein M11L.</text>
</comment>
<comment type="subunit">
    <text evidence="4">(Microbial infection) Interacts with Epstein-Barr virus protein BALF1.</text>
</comment>
<comment type="subunit">
    <text evidence="12">(Microbial infection) Interacts with adenovirus protein E1B 19K.</text>
</comment>
<comment type="interaction">
    <interactant intactId="EBI-519866">
        <id>Q16611</id>
    </interactant>
    <interactant intactId="EBI-702390">
        <id>Q9UBB4</id>
        <label>ATXN10</label>
    </interactant>
    <organismsDiffer>false</organismsDiffer>
    <experiments>3</experiments>
</comment>
<comment type="interaction">
    <interactant intactId="EBI-519866">
        <id>Q16611</id>
    </interactant>
    <interactant intactId="EBI-519866">
        <id>Q16611</id>
        <label>BAK1</label>
    </interactant>
    <organismsDiffer>false</organismsDiffer>
    <experiments>5</experiments>
</comment>
<comment type="interaction">
    <interactant intactId="EBI-519866">
        <id>Q16611</id>
    </interactant>
    <interactant intactId="EBI-516580">
        <id>Q07812</id>
        <label>BAX</label>
    </interactant>
    <organismsDiffer>false</organismsDiffer>
    <experiments>6</experiments>
</comment>
<comment type="interaction">
    <interactant intactId="EBI-519866">
        <id>Q16611</id>
    </interactant>
    <interactant intactId="EBI-77694">
        <id>P10415</id>
        <label>BCL2</label>
    </interactant>
    <organismsDiffer>false</organismsDiffer>
    <experiments>3</experiments>
</comment>
<comment type="interaction">
    <interactant intactId="EBI-519866">
        <id>Q16611</id>
    </interactant>
    <interactant intactId="EBI-1003550">
        <id>Q16548</id>
        <label>BCL2A1</label>
    </interactant>
    <organismsDiffer>false</organismsDiffer>
    <experiments>6</experiments>
</comment>
<comment type="interaction">
    <interactant intactId="EBI-519866">
        <id>Q16611</id>
    </interactant>
    <interactant intactId="EBI-78035">
        <id>Q07817</id>
        <label>BCL2L1</label>
    </interactant>
    <organismsDiffer>false</organismsDiffer>
    <experiments>38</experiments>
</comment>
<comment type="interaction">
    <interactant intactId="EBI-519866">
        <id>Q16611</id>
    </interactant>
    <interactant intactId="EBI-287195">
        <id>Q07817-1</id>
        <label>BCL2L1</label>
    </interactant>
    <organismsDiffer>false</organismsDiffer>
    <experiments>13</experiments>
</comment>
<comment type="interaction">
    <interactant intactId="EBI-519866">
        <id>Q16611</id>
    </interactant>
    <interactant intactId="EBI-707714">
        <id>Q92843</id>
        <label>BCL2L2</label>
    </interactant>
    <organismsDiffer>false</organismsDiffer>
    <experiments>8</experiments>
</comment>
<comment type="interaction">
    <interactant intactId="EBI-519866">
        <id>Q16611</id>
    </interactant>
    <interactant intactId="EBI-519672">
        <id>P55957</id>
        <label>BID</label>
    </interactant>
    <organismsDiffer>false</organismsDiffer>
    <experiments>4</experiments>
</comment>
<comment type="interaction">
    <interactant intactId="EBI-519866">
        <id>Q16611</id>
    </interactant>
    <interactant intactId="EBI-10976677">
        <id>G5E9A7</id>
        <label>DMWD</label>
    </interactant>
    <organismsDiffer>false</organismsDiffer>
    <experiments>3</experiments>
</comment>
<comment type="interaction">
    <interactant intactId="EBI-519866">
        <id>Q16611</id>
    </interactant>
    <interactant intactId="EBI-747754">
        <id>P28799</id>
        <label>GRN</label>
    </interactant>
    <organismsDiffer>false</organismsDiffer>
    <experiments>3</experiments>
</comment>
<comment type="interaction">
    <interactant intactId="EBI-519866">
        <id>Q16611</id>
    </interactant>
    <interactant intactId="EBI-352682">
        <id>P04792</id>
        <label>HSPB1</label>
    </interactant>
    <organismsDiffer>false</organismsDiffer>
    <experiments>3</experiments>
</comment>
<comment type="interaction">
    <interactant intactId="EBI-519866">
        <id>Q16611</id>
    </interactant>
    <interactant intactId="EBI-1055254">
        <id>Q8WXH2</id>
        <label>JPH3</label>
    </interactant>
    <organismsDiffer>false</organismsDiffer>
    <experiments>3</experiments>
</comment>
<comment type="interaction">
    <interactant intactId="EBI-519866">
        <id>Q16611</id>
    </interactant>
    <interactant intactId="EBI-10975473">
        <id>O60333-2</id>
        <label>KIF1B</label>
    </interactant>
    <organismsDiffer>false</organismsDiffer>
    <experiments>3</experiments>
</comment>
<comment type="interaction">
    <interactant intactId="EBI-519866">
        <id>Q16611</id>
    </interactant>
    <interactant intactId="EBI-1003422">
        <id>Q07820</id>
        <label>MCL1</label>
    </interactant>
    <organismsDiffer>false</organismsDiffer>
    <experiments>19</experiments>
</comment>
<comment type="interaction">
    <interactant intactId="EBI-519866">
        <id>Q16611</id>
    </interactant>
    <interactant intactId="EBI-2010251">
        <id>P49810</id>
        <label>PSEN2</label>
    </interactant>
    <organismsDiffer>false</organismsDiffer>
    <experiments>3</experiments>
</comment>
<comment type="interaction">
    <interactant intactId="EBI-519866">
        <id>Q16611</id>
    </interactant>
    <interactant intactId="EBI-396669">
        <id>Q9Y3C5</id>
        <label>RNF11</label>
    </interactant>
    <organismsDiffer>false</organismsDiffer>
    <experiments>3</experiments>
</comment>
<comment type="interaction">
    <interactant intactId="EBI-519866">
        <id>Q16611</id>
    </interactant>
    <interactant intactId="EBI-10697720">
        <id>Q7L3V2</id>
        <label>RTL10</label>
    </interactant>
    <organismsDiffer>false</organismsDiffer>
    <experiments>2</experiments>
</comment>
<comment type="interaction">
    <interactant intactId="EBI-519866">
        <id>Q16611</id>
    </interactant>
    <interactant intactId="EBI-990792">
        <id>P00441</id>
        <label>SOD1</label>
    </interactant>
    <organismsDiffer>false</organismsDiffer>
    <experiments>3</experiments>
</comment>
<comment type="interaction">
    <interactant intactId="EBI-519866">
        <id>Q16611</id>
    </interactant>
    <interactant intactId="EBI-5235340">
        <id>Q7Z699</id>
        <label>SPRED1</label>
    </interactant>
    <organismsDiffer>false</organismsDiffer>
    <experiments>3</experiments>
</comment>
<comment type="interaction">
    <interactant intactId="EBI-519866">
        <id>Q16611</id>
    </interactant>
    <interactant intactId="EBI-12806590">
        <id>Q86WV8</id>
        <label>TSC1</label>
    </interactant>
    <organismsDiffer>false</organismsDiffer>
    <experiments>3</experiments>
</comment>
<comment type="interaction">
    <interactant intactId="EBI-519866">
        <id>Q16611</id>
    </interactant>
    <interactant intactId="EBI-707292">
        <id>P97287</id>
        <label>Mcl1</label>
    </interactant>
    <organismsDiffer>true</organismsDiffer>
    <experiments>3</experiments>
</comment>
<comment type="interaction">
    <interactant intactId="EBI-519866">
        <id>Q16611</id>
    </interactant>
    <interactant intactId="EBI-8437663">
        <id>Q80U63</id>
        <label>Mfn2</label>
    </interactant>
    <organismsDiffer>true</organismsDiffer>
    <experiments>3</experiments>
</comment>
<comment type="interaction">
    <interactant intactId="EBI-519866">
        <id>Q16611</id>
    </interactant>
    <interactant intactId="EBI-8041400">
        <id>P24356</id>
        <label>OPG045</label>
    </interactant>
    <organismsDiffer>true</organismsDiffer>
    <experiments>6</experiments>
</comment>
<comment type="interaction">
    <interactant intactId="EBI-26980661">
        <id>Q16611-1</id>
    </interactant>
    <interactant intactId="EBI-26980661">
        <id>Q16611-1</id>
        <label>BAK1</label>
    </interactant>
    <organismsDiffer>false</organismsDiffer>
    <experiments>4</experiments>
</comment>
<comment type="subcellular location">
    <subcellularLocation>
        <location evidence="11">Mitochondrion outer membrane</location>
        <topology evidence="2">Single-pass membrane protein</topology>
    </subcellularLocation>
</comment>
<comment type="alternative products">
    <event type="alternative splicing"/>
    <isoform>
        <id>Q16611-1</id>
        <name>1</name>
        <sequence type="displayed"/>
    </isoform>
    <isoform>
        <id>Q16611-2</id>
        <name>2</name>
        <sequence type="described" ref="VSP_056551 VSP_056552"/>
    </isoform>
</comment>
<comment type="tissue specificity">
    <text>Expressed in a wide variety of tissues, with highest levels in the heart and skeletal muscle.</text>
</comment>
<comment type="domain">
    <text>Intact BH3 motif is required by BIK, BID, BAK, BAD and BAX for their pro-apoptotic activity and for their interaction with anti-apoptotic members of the Bcl-2 family.</text>
</comment>
<comment type="similarity">
    <text evidence="17">Belongs to the Bcl-2 family.</text>
</comment>
<comment type="online information" name="Atlas of Genetics and Cytogenetics in Oncology and Haematology">
    <link uri="https://atlasgeneticsoncology.org/gene/752/BAK1"/>
</comment>